<evidence type="ECO:0000255" key="1">
    <source>
        <dbReference type="HAMAP-Rule" id="MF_01265"/>
    </source>
</evidence>
<dbReference type="EC" id="1.4.1.21" evidence="1"/>
<dbReference type="EMBL" id="BX640412">
    <property type="protein sequence ID" value="CAE44895.1"/>
    <property type="molecule type" value="Genomic_DNA"/>
</dbReference>
<dbReference type="RefSeq" id="NP_879414.1">
    <property type="nucleotide sequence ID" value="NC_002929.2"/>
</dbReference>
<dbReference type="RefSeq" id="WP_010929880.1">
    <property type="nucleotide sequence ID" value="NZ_CP039022.1"/>
</dbReference>
<dbReference type="SMR" id="Q7VS76"/>
<dbReference type="STRING" id="257313.BP0567"/>
<dbReference type="PaxDb" id="257313-BP0567"/>
<dbReference type="KEGG" id="bpe:BP0567"/>
<dbReference type="PATRIC" id="fig|257313.5.peg.609"/>
<dbReference type="eggNOG" id="COG1712">
    <property type="taxonomic scope" value="Bacteria"/>
</dbReference>
<dbReference type="HOGENOM" id="CLU_089550_0_0_4"/>
<dbReference type="UniPathway" id="UPA00253">
    <property type="reaction ID" value="UER00456"/>
</dbReference>
<dbReference type="Proteomes" id="UP000002676">
    <property type="component" value="Chromosome"/>
</dbReference>
<dbReference type="GO" id="GO:0033735">
    <property type="term" value="F:aspartate dehydrogenase activity"/>
    <property type="evidence" value="ECO:0007669"/>
    <property type="project" value="UniProtKB-EC"/>
</dbReference>
<dbReference type="GO" id="GO:0051287">
    <property type="term" value="F:NAD binding"/>
    <property type="evidence" value="ECO:0007669"/>
    <property type="project" value="UniProtKB-UniRule"/>
</dbReference>
<dbReference type="GO" id="GO:0050661">
    <property type="term" value="F:NADP binding"/>
    <property type="evidence" value="ECO:0007669"/>
    <property type="project" value="UniProtKB-UniRule"/>
</dbReference>
<dbReference type="GO" id="GO:0016639">
    <property type="term" value="F:oxidoreductase activity, acting on the CH-NH2 group of donors, NAD or NADP as acceptor"/>
    <property type="evidence" value="ECO:0007669"/>
    <property type="project" value="UniProtKB-UniRule"/>
</dbReference>
<dbReference type="GO" id="GO:0009435">
    <property type="term" value="P:NAD biosynthetic process"/>
    <property type="evidence" value="ECO:0007669"/>
    <property type="project" value="UniProtKB-UniRule"/>
</dbReference>
<dbReference type="Gene3D" id="3.30.360.10">
    <property type="entry name" value="Dihydrodipicolinate Reductase, domain 2"/>
    <property type="match status" value="1"/>
</dbReference>
<dbReference type="Gene3D" id="3.40.50.720">
    <property type="entry name" value="NAD(P)-binding Rossmann-like Domain"/>
    <property type="match status" value="1"/>
</dbReference>
<dbReference type="HAMAP" id="MF_01265">
    <property type="entry name" value="NadX"/>
    <property type="match status" value="1"/>
</dbReference>
<dbReference type="InterPro" id="IPR005106">
    <property type="entry name" value="Asp/hSer_DH_NAD-bd"/>
</dbReference>
<dbReference type="InterPro" id="IPR002811">
    <property type="entry name" value="Asp_DH"/>
</dbReference>
<dbReference type="InterPro" id="IPR020626">
    <property type="entry name" value="Asp_DH_prok"/>
</dbReference>
<dbReference type="InterPro" id="IPR011182">
    <property type="entry name" value="L-Asp_DH"/>
</dbReference>
<dbReference type="InterPro" id="IPR036291">
    <property type="entry name" value="NAD(P)-bd_dom_sf"/>
</dbReference>
<dbReference type="NCBIfam" id="NF009828">
    <property type="entry name" value="PRK13303.1-3"/>
    <property type="match status" value="1"/>
</dbReference>
<dbReference type="NCBIfam" id="NF009829">
    <property type="entry name" value="PRK13303.1-4"/>
    <property type="match status" value="1"/>
</dbReference>
<dbReference type="PANTHER" id="PTHR31873:SF6">
    <property type="entry name" value="ASPARTATE DEHYDROGENASE DOMAIN-CONTAINING PROTEIN"/>
    <property type="match status" value="1"/>
</dbReference>
<dbReference type="PANTHER" id="PTHR31873">
    <property type="entry name" value="L-ASPARTATE DEHYDROGENASE-RELATED"/>
    <property type="match status" value="1"/>
</dbReference>
<dbReference type="Pfam" id="PF01958">
    <property type="entry name" value="Asp_DH_C"/>
    <property type="match status" value="1"/>
</dbReference>
<dbReference type="Pfam" id="PF03447">
    <property type="entry name" value="NAD_binding_3"/>
    <property type="match status" value="1"/>
</dbReference>
<dbReference type="PIRSF" id="PIRSF005227">
    <property type="entry name" value="Asp_dh_NAD_syn"/>
    <property type="match status" value="1"/>
</dbReference>
<dbReference type="SUPFAM" id="SSF55347">
    <property type="entry name" value="Glyceraldehyde-3-phosphate dehydrogenase-like, C-terminal domain"/>
    <property type="match status" value="1"/>
</dbReference>
<dbReference type="SUPFAM" id="SSF51735">
    <property type="entry name" value="NAD(P)-binding Rossmann-fold domains"/>
    <property type="match status" value="1"/>
</dbReference>
<reference key="1">
    <citation type="journal article" date="2003" name="Nat. Genet.">
        <title>Comparative analysis of the genome sequences of Bordetella pertussis, Bordetella parapertussis and Bordetella bronchiseptica.</title>
        <authorList>
            <person name="Parkhill J."/>
            <person name="Sebaihia M."/>
            <person name="Preston A."/>
            <person name="Murphy L.D."/>
            <person name="Thomson N.R."/>
            <person name="Harris D.E."/>
            <person name="Holden M.T.G."/>
            <person name="Churcher C.M."/>
            <person name="Bentley S.D."/>
            <person name="Mungall K.L."/>
            <person name="Cerdeno-Tarraga A.-M."/>
            <person name="Temple L."/>
            <person name="James K.D."/>
            <person name="Harris B."/>
            <person name="Quail M.A."/>
            <person name="Achtman M."/>
            <person name="Atkin R."/>
            <person name="Baker S."/>
            <person name="Basham D."/>
            <person name="Bason N."/>
            <person name="Cherevach I."/>
            <person name="Chillingworth T."/>
            <person name="Collins M."/>
            <person name="Cronin A."/>
            <person name="Davis P."/>
            <person name="Doggett J."/>
            <person name="Feltwell T."/>
            <person name="Goble A."/>
            <person name="Hamlin N."/>
            <person name="Hauser H."/>
            <person name="Holroyd S."/>
            <person name="Jagels K."/>
            <person name="Leather S."/>
            <person name="Moule S."/>
            <person name="Norberczak H."/>
            <person name="O'Neil S."/>
            <person name="Ormond D."/>
            <person name="Price C."/>
            <person name="Rabbinowitsch E."/>
            <person name="Rutter S."/>
            <person name="Sanders M."/>
            <person name="Saunders D."/>
            <person name="Seeger K."/>
            <person name="Sharp S."/>
            <person name="Simmonds M."/>
            <person name="Skelton J."/>
            <person name="Squares R."/>
            <person name="Squares S."/>
            <person name="Stevens K."/>
            <person name="Unwin L."/>
            <person name="Whitehead S."/>
            <person name="Barrell B.G."/>
            <person name="Maskell D.J."/>
        </authorList>
    </citation>
    <scope>NUCLEOTIDE SEQUENCE [LARGE SCALE GENOMIC DNA]</scope>
    <source>
        <strain>Tohama I / ATCC BAA-589 / NCTC 13251</strain>
    </source>
</reference>
<accession>Q7VS76</accession>
<gene>
    <name evidence="1" type="primary">nadX1</name>
    <name type="ordered locus">BP0567</name>
</gene>
<keyword id="KW-0520">NAD</keyword>
<keyword id="KW-0521">NADP</keyword>
<keyword id="KW-0560">Oxidoreductase</keyword>
<keyword id="KW-0662">Pyridine nucleotide biosynthesis</keyword>
<keyword id="KW-1185">Reference proteome</keyword>
<name>ASPD1_BORPE</name>
<sequence>MNTPLRVGIVGCGVLANAMAGHLARQPRPVEIVGCLVRDPGRARGALPCHGSWEALLAQRPDVVVECAGQAALAQYAQAILAAGVDLVPASVGALADDALRGALLEAAAAAGARIRIPSGAMVGIDGLAAARHVGVAEVLYRGTMPPVALQRYVSGPLPERGLAFAGSAREAVARFPKNVNLTGTIALAGIGFDRTRVEMLIDPDATANVHELLARGEFGDFHARVSGLRISESSPSSRIVAGSLAQAALGSGFLALS</sequence>
<comment type="function">
    <text evidence="1">Specifically catalyzes the NAD or NADP-dependent dehydrogenation of L-aspartate to iminoaspartate.</text>
</comment>
<comment type="catalytic activity">
    <reaction evidence="1">
        <text>L-aspartate + NADP(+) + H2O = oxaloacetate + NH4(+) + NADPH + H(+)</text>
        <dbReference type="Rhea" id="RHEA:11784"/>
        <dbReference type="ChEBI" id="CHEBI:15377"/>
        <dbReference type="ChEBI" id="CHEBI:15378"/>
        <dbReference type="ChEBI" id="CHEBI:16452"/>
        <dbReference type="ChEBI" id="CHEBI:28938"/>
        <dbReference type="ChEBI" id="CHEBI:29991"/>
        <dbReference type="ChEBI" id="CHEBI:57783"/>
        <dbReference type="ChEBI" id="CHEBI:58349"/>
        <dbReference type="EC" id="1.4.1.21"/>
    </reaction>
</comment>
<comment type="catalytic activity">
    <reaction evidence="1">
        <text>L-aspartate + NAD(+) + H2O = oxaloacetate + NH4(+) + NADH + H(+)</text>
        <dbReference type="Rhea" id="RHEA:11788"/>
        <dbReference type="ChEBI" id="CHEBI:15377"/>
        <dbReference type="ChEBI" id="CHEBI:15378"/>
        <dbReference type="ChEBI" id="CHEBI:16452"/>
        <dbReference type="ChEBI" id="CHEBI:28938"/>
        <dbReference type="ChEBI" id="CHEBI:29991"/>
        <dbReference type="ChEBI" id="CHEBI:57540"/>
        <dbReference type="ChEBI" id="CHEBI:57945"/>
        <dbReference type="EC" id="1.4.1.21"/>
    </reaction>
</comment>
<comment type="pathway">
    <text evidence="1">Cofactor biosynthesis; NAD(+) biosynthesis; iminoaspartate from L-aspartate (dehydrogenase route): step 1/1.</text>
</comment>
<comment type="miscellaneous">
    <text evidence="1">The iminoaspartate product is unstable in aqueous solution and can decompose to oxaloacetate and ammonia.</text>
</comment>
<comment type="similarity">
    <text evidence="1">Belongs to the L-aspartate dehydrogenase family.</text>
</comment>
<proteinExistence type="inferred from homology"/>
<protein>
    <recommendedName>
        <fullName evidence="1">L-aspartate dehydrogenase 1</fullName>
        <ecNumber evidence="1">1.4.1.21</ecNumber>
    </recommendedName>
</protein>
<feature type="chain" id="PRO_0000144885" description="L-aspartate dehydrogenase 1">
    <location>
        <begin position="1"/>
        <end position="258"/>
    </location>
</feature>
<feature type="active site" evidence="1">
    <location>
        <position position="211"/>
    </location>
</feature>
<feature type="binding site" evidence="1">
    <location>
        <position position="121"/>
    </location>
    <ligand>
        <name>NAD(+)</name>
        <dbReference type="ChEBI" id="CHEBI:57540"/>
    </ligand>
</feature>
<feature type="binding site" evidence="1">
    <location>
        <position position="181"/>
    </location>
    <ligand>
        <name>NAD(+)</name>
        <dbReference type="ChEBI" id="CHEBI:57540"/>
    </ligand>
</feature>
<organism>
    <name type="scientific">Bordetella pertussis (strain Tohama I / ATCC BAA-589 / NCTC 13251)</name>
    <dbReference type="NCBI Taxonomy" id="257313"/>
    <lineage>
        <taxon>Bacteria</taxon>
        <taxon>Pseudomonadati</taxon>
        <taxon>Pseudomonadota</taxon>
        <taxon>Betaproteobacteria</taxon>
        <taxon>Burkholderiales</taxon>
        <taxon>Alcaligenaceae</taxon>
        <taxon>Bordetella</taxon>
    </lineage>
</organism>